<gene>
    <name evidence="1" type="primary">fliW</name>
    <name type="ordered locus">LBF_3099</name>
</gene>
<keyword id="KW-1005">Bacterial flagellum biogenesis</keyword>
<keyword id="KW-0143">Chaperone</keyword>
<keyword id="KW-0963">Cytoplasm</keyword>
<keyword id="KW-0810">Translation regulation</keyword>
<accession>B0SGR1</accession>
<evidence type="ECO:0000255" key="1">
    <source>
        <dbReference type="HAMAP-Rule" id="MF_01185"/>
    </source>
</evidence>
<reference key="1">
    <citation type="journal article" date="2008" name="PLoS ONE">
        <title>Genome sequence of the saprophyte Leptospira biflexa provides insights into the evolution of Leptospira and the pathogenesis of leptospirosis.</title>
        <authorList>
            <person name="Picardeau M."/>
            <person name="Bulach D.M."/>
            <person name="Bouchier C."/>
            <person name="Zuerner R.L."/>
            <person name="Zidane N."/>
            <person name="Wilson P.J."/>
            <person name="Creno S."/>
            <person name="Kuczek E.S."/>
            <person name="Bommezzadri S."/>
            <person name="Davis J.C."/>
            <person name="McGrath A."/>
            <person name="Johnson M.J."/>
            <person name="Boursaux-Eude C."/>
            <person name="Seemann T."/>
            <person name="Rouy Z."/>
            <person name="Coppel R.L."/>
            <person name="Rood J.I."/>
            <person name="Lajus A."/>
            <person name="Davies J.K."/>
            <person name="Medigue C."/>
            <person name="Adler B."/>
        </authorList>
    </citation>
    <scope>NUCLEOTIDE SEQUENCE [LARGE SCALE GENOMIC DNA]</scope>
    <source>
        <strain>Patoc 1 / Ames</strain>
    </source>
</reference>
<name>FLIW_LEPBA</name>
<comment type="function">
    <text evidence="1">Acts as an anti-CsrA protein, binds CsrA and prevents it from repressing translation of its target genes, one of which is flagellin. Binds to flagellin and participates in the assembly of the flagellum.</text>
</comment>
<comment type="subunit">
    <text evidence="1">Interacts with translational regulator CsrA and flagellin(s).</text>
</comment>
<comment type="subcellular location">
    <subcellularLocation>
        <location evidence="1">Cytoplasm</location>
    </subcellularLocation>
</comment>
<comment type="similarity">
    <text evidence="1">Belongs to the FliW family.</text>
</comment>
<proteinExistence type="inferred from homology"/>
<feature type="chain" id="PRO_1000138261" description="Flagellar assembly factor FliW">
    <location>
        <begin position="1"/>
        <end position="153"/>
    </location>
</feature>
<dbReference type="EMBL" id="CP000777">
    <property type="protein sequence ID" value="ABZ95568.1"/>
    <property type="molecule type" value="Genomic_DNA"/>
</dbReference>
<dbReference type="RefSeq" id="WP_012476436.1">
    <property type="nucleotide sequence ID" value="NC_010842.1"/>
</dbReference>
<dbReference type="SMR" id="B0SGR1"/>
<dbReference type="KEGG" id="lbf:LBF_3099"/>
<dbReference type="HOGENOM" id="CLU_112356_0_0_12"/>
<dbReference type="GO" id="GO:0005737">
    <property type="term" value="C:cytoplasm"/>
    <property type="evidence" value="ECO:0007669"/>
    <property type="project" value="UniProtKB-SubCell"/>
</dbReference>
<dbReference type="GO" id="GO:0044780">
    <property type="term" value="P:bacterial-type flagellum assembly"/>
    <property type="evidence" value="ECO:0007669"/>
    <property type="project" value="UniProtKB-UniRule"/>
</dbReference>
<dbReference type="GO" id="GO:0006417">
    <property type="term" value="P:regulation of translation"/>
    <property type="evidence" value="ECO:0007669"/>
    <property type="project" value="UniProtKB-KW"/>
</dbReference>
<dbReference type="Gene3D" id="2.30.290.10">
    <property type="entry name" value="BH3618-like"/>
    <property type="match status" value="1"/>
</dbReference>
<dbReference type="HAMAP" id="MF_01185">
    <property type="entry name" value="FliW"/>
    <property type="match status" value="1"/>
</dbReference>
<dbReference type="InterPro" id="IPR003775">
    <property type="entry name" value="Flagellar_assembly_factor_FliW"/>
</dbReference>
<dbReference type="InterPro" id="IPR024046">
    <property type="entry name" value="Flagellar_assmbl_FliW_dom_sf"/>
</dbReference>
<dbReference type="NCBIfam" id="NF009793">
    <property type="entry name" value="PRK13285.1-1"/>
    <property type="match status" value="1"/>
</dbReference>
<dbReference type="PANTHER" id="PTHR39190">
    <property type="entry name" value="FLAGELLAR ASSEMBLY FACTOR FLIW"/>
    <property type="match status" value="1"/>
</dbReference>
<dbReference type="PANTHER" id="PTHR39190:SF1">
    <property type="entry name" value="FLAGELLAR ASSEMBLY FACTOR FLIW"/>
    <property type="match status" value="1"/>
</dbReference>
<dbReference type="Pfam" id="PF02623">
    <property type="entry name" value="FliW"/>
    <property type="match status" value="1"/>
</dbReference>
<dbReference type="SUPFAM" id="SSF141457">
    <property type="entry name" value="BH3618-like"/>
    <property type="match status" value="1"/>
</dbReference>
<sequence>MSVTIHTKPFGTIQVDSKQILKFPQGLLGFEEFDEYALIEESAESPFKWLQSTKESGLAFIVIQPELFMNQYKPAISDEELHDIGLTSWKDGIIFLIVTIPHDNPKGMTANLQGPIILNGKEGKGKQCISRDENHSIRKNIIESMEEMSSEKV</sequence>
<organism>
    <name type="scientific">Leptospira biflexa serovar Patoc (strain Patoc 1 / Ames)</name>
    <dbReference type="NCBI Taxonomy" id="355278"/>
    <lineage>
        <taxon>Bacteria</taxon>
        <taxon>Pseudomonadati</taxon>
        <taxon>Spirochaetota</taxon>
        <taxon>Spirochaetia</taxon>
        <taxon>Leptospirales</taxon>
        <taxon>Leptospiraceae</taxon>
        <taxon>Leptospira</taxon>
    </lineage>
</organism>
<protein>
    <recommendedName>
        <fullName evidence="1">Flagellar assembly factor FliW</fullName>
    </recommendedName>
</protein>